<organism>
    <name type="scientific">Yersinia pestis (strain Pestoides F)</name>
    <dbReference type="NCBI Taxonomy" id="386656"/>
    <lineage>
        <taxon>Bacteria</taxon>
        <taxon>Pseudomonadati</taxon>
        <taxon>Pseudomonadota</taxon>
        <taxon>Gammaproteobacteria</taxon>
        <taxon>Enterobacterales</taxon>
        <taxon>Yersiniaceae</taxon>
        <taxon>Yersinia</taxon>
    </lineage>
</organism>
<keyword id="KW-0560">Oxidoreductase</keyword>
<dbReference type="EC" id="1.8.4.11" evidence="1"/>
<dbReference type="EMBL" id="CP000668">
    <property type="protein sequence ID" value="ABP41924.1"/>
    <property type="molecule type" value="Genomic_DNA"/>
</dbReference>
<dbReference type="RefSeq" id="WP_002210165.1">
    <property type="nucleotide sequence ID" value="NZ_CP009715.1"/>
</dbReference>
<dbReference type="SMR" id="A4TRL2"/>
<dbReference type="GeneID" id="57975189"/>
<dbReference type="KEGG" id="ypp:YPDSF_3574"/>
<dbReference type="PATRIC" id="fig|386656.14.peg.231"/>
<dbReference type="GO" id="GO:0005737">
    <property type="term" value="C:cytoplasm"/>
    <property type="evidence" value="ECO:0007669"/>
    <property type="project" value="TreeGrafter"/>
</dbReference>
<dbReference type="GO" id="GO:0036456">
    <property type="term" value="F:L-methionine-(S)-S-oxide reductase activity"/>
    <property type="evidence" value="ECO:0007669"/>
    <property type="project" value="TreeGrafter"/>
</dbReference>
<dbReference type="GO" id="GO:0008113">
    <property type="term" value="F:peptide-methionine (S)-S-oxide reductase activity"/>
    <property type="evidence" value="ECO:0007669"/>
    <property type="project" value="UniProtKB-UniRule"/>
</dbReference>
<dbReference type="GO" id="GO:0034599">
    <property type="term" value="P:cellular response to oxidative stress"/>
    <property type="evidence" value="ECO:0007669"/>
    <property type="project" value="TreeGrafter"/>
</dbReference>
<dbReference type="GO" id="GO:0036211">
    <property type="term" value="P:protein modification process"/>
    <property type="evidence" value="ECO:0007669"/>
    <property type="project" value="UniProtKB-UniRule"/>
</dbReference>
<dbReference type="FunFam" id="3.30.1060.10:FF:000001">
    <property type="entry name" value="Peptide methionine sulfoxide reductase MsrA"/>
    <property type="match status" value="1"/>
</dbReference>
<dbReference type="Gene3D" id="3.30.1060.10">
    <property type="entry name" value="Peptide methionine sulphoxide reductase MsrA"/>
    <property type="match status" value="1"/>
</dbReference>
<dbReference type="HAMAP" id="MF_01401">
    <property type="entry name" value="MsrA"/>
    <property type="match status" value="1"/>
</dbReference>
<dbReference type="InterPro" id="IPR002569">
    <property type="entry name" value="Met_Sox_Rdtase_MsrA_dom"/>
</dbReference>
<dbReference type="InterPro" id="IPR036509">
    <property type="entry name" value="Met_Sox_Rdtase_MsrA_sf"/>
</dbReference>
<dbReference type="InterPro" id="IPR050162">
    <property type="entry name" value="MsrA_MetSO_reductase"/>
</dbReference>
<dbReference type="NCBIfam" id="TIGR00401">
    <property type="entry name" value="msrA"/>
    <property type="match status" value="1"/>
</dbReference>
<dbReference type="PANTHER" id="PTHR42799">
    <property type="entry name" value="MITOCHONDRIAL PEPTIDE METHIONINE SULFOXIDE REDUCTASE"/>
    <property type="match status" value="1"/>
</dbReference>
<dbReference type="PANTHER" id="PTHR42799:SF2">
    <property type="entry name" value="MITOCHONDRIAL PEPTIDE METHIONINE SULFOXIDE REDUCTASE"/>
    <property type="match status" value="1"/>
</dbReference>
<dbReference type="Pfam" id="PF01625">
    <property type="entry name" value="PMSR"/>
    <property type="match status" value="1"/>
</dbReference>
<dbReference type="SUPFAM" id="SSF55068">
    <property type="entry name" value="Peptide methionine sulfoxide reductase"/>
    <property type="match status" value="1"/>
</dbReference>
<name>MSRA_YERPP</name>
<gene>
    <name evidence="1" type="primary">msrA</name>
    <name type="ordered locus">YPDSF_3574</name>
</gene>
<reference key="1">
    <citation type="submission" date="2007-02" db="EMBL/GenBank/DDBJ databases">
        <title>Complete sequence of chromosome of Yersinia pestis Pestoides F.</title>
        <authorList>
            <consortium name="US DOE Joint Genome Institute"/>
            <person name="Copeland A."/>
            <person name="Lucas S."/>
            <person name="Lapidus A."/>
            <person name="Barry K."/>
            <person name="Detter J.C."/>
            <person name="Glavina del Rio T."/>
            <person name="Hammon N."/>
            <person name="Israni S."/>
            <person name="Dalin E."/>
            <person name="Tice H."/>
            <person name="Pitluck S."/>
            <person name="Di Bartolo G."/>
            <person name="Chain P."/>
            <person name="Malfatti S."/>
            <person name="Shin M."/>
            <person name="Vergez L."/>
            <person name="Schmutz J."/>
            <person name="Larimer F."/>
            <person name="Land M."/>
            <person name="Hauser L."/>
            <person name="Worsham P."/>
            <person name="Chu M."/>
            <person name="Bearden S."/>
            <person name="Garcia E."/>
            <person name="Richardson P."/>
        </authorList>
    </citation>
    <scope>NUCLEOTIDE SEQUENCE [LARGE SCALE GENOMIC DNA]</scope>
    <source>
        <strain>Pestoides F</strain>
    </source>
</reference>
<proteinExistence type="inferred from homology"/>
<accession>A4TRL2</accession>
<comment type="function">
    <text evidence="1">Has an important function as a repair enzyme for proteins that have been inactivated by oxidation. Catalyzes the reversible oxidation-reduction of methionine sulfoxide in proteins to methionine.</text>
</comment>
<comment type="catalytic activity">
    <reaction evidence="1">
        <text>L-methionyl-[protein] + [thioredoxin]-disulfide + H2O = L-methionyl-(S)-S-oxide-[protein] + [thioredoxin]-dithiol</text>
        <dbReference type="Rhea" id="RHEA:14217"/>
        <dbReference type="Rhea" id="RHEA-COMP:10698"/>
        <dbReference type="Rhea" id="RHEA-COMP:10700"/>
        <dbReference type="Rhea" id="RHEA-COMP:12313"/>
        <dbReference type="Rhea" id="RHEA-COMP:12315"/>
        <dbReference type="ChEBI" id="CHEBI:15377"/>
        <dbReference type="ChEBI" id="CHEBI:16044"/>
        <dbReference type="ChEBI" id="CHEBI:29950"/>
        <dbReference type="ChEBI" id="CHEBI:44120"/>
        <dbReference type="ChEBI" id="CHEBI:50058"/>
        <dbReference type="EC" id="1.8.4.11"/>
    </reaction>
</comment>
<comment type="catalytic activity">
    <reaction evidence="1">
        <text>[thioredoxin]-disulfide + L-methionine + H2O = L-methionine (S)-S-oxide + [thioredoxin]-dithiol</text>
        <dbReference type="Rhea" id="RHEA:19993"/>
        <dbReference type="Rhea" id="RHEA-COMP:10698"/>
        <dbReference type="Rhea" id="RHEA-COMP:10700"/>
        <dbReference type="ChEBI" id="CHEBI:15377"/>
        <dbReference type="ChEBI" id="CHEBI:29950"/>
        <dbReference type="ChEBI" id="CHEBI:50058"/>
        <dbReference type="ChEBI" id="CHEBI:57844"/>
        <dbReference type="ChEBI" id="CHEBI:58772"/>
        <dbReference type="EC" id="1.8.4.11"/>
    </reaction>
</comment>
<comment type="similarity">
    <text evidence="1">Belongs to the MsrA Met sulfoxide reductase family.</text>
</comment>
<evidence type="ECO:0000255" key="1">
    <source>
        <dbReference type="HAMAP-Rule" id="MF_01401"/>
    </source>
</evidence>
<feature type="chain" id="PRO_1000068377" description="Peptide methionine sulfoxide reductase MsrA">
    <location>
        <begin position="1"/>
        <end position="212"/>
    </location>
</feature>
<feature type="active site" evidence="1">
    <location>
        <position position="52"/>
    </location>
</feature>
<protein>
    <recommendedName>
        <fullName evidence="1">Peptide methionine sulfoxide reductase MsrA</fullName>
        <shortName evidence="1">Protein-methionine-S-oxide reductase</shortName>
        <ecNumber evidence="1">1.8.4.11</ecNumber>
    </recommendedName>
    <alternativeName>
        <fullName evidence="1">Peptide-methionine (S)-S-oxide reductase</fullName>
        <shortName evidence="1">Peptide Met(O) reductase</shortName>
    </alternativeName>
</protein>
<sequence length="212" mass="23434">MQNVDNTAVIDAANALPGRLTSIPVSPLHAVHGHSMTYIPEGMDLAFFAMGCFWGAERLFWQQPGVYSTAAGYSGGHTPNPTYHEVCSGRTGHAEVVRVVFDPAVISYQQLLQIFWENHDPAQGMRQGGDVGTQYRSAIYVLTPEQEEQAHKSRERFQQAMEKAGDQRVITSEITVALPFYYAEDDHQQYLHKNPHGYCGLGGIGVCLPPNV</sequence>